<gene>
    <name evidence="1" type="primary">argH</name>
    <name type="ordered locus">BMA10229_A2991</name>
</gene>
<proteinExistence type="inferred from homology"/>
<evidence type="ECO:0000255" key="1">
    <source>
        <dbReference type="HAMAP-Rule" id="MF_00006"/>
    </source>
</evidence>
<keyword id="KW-0028">Amino-acid biosynthesis</keyword>
<keyword id="KW-0055">Arginine biosynthesis</keyword>
<keyword id="KW-0963">Cytoplasm</keyword>
<keyword id="KW-0456">Lyase</keyword>
<dbReference type="EC" id="4.3.2.1" evidence="1"/>
<dbReference type="EMBL" id="CP000546">
    <property type="protein sequence ID" value="ABN01055.1"/>
    <property type="molecule type" value="Genomic_DNA"/>
</dbReference>
<dbReference type="RefSeq" id="WP_004191886.1">
    <property type="nucleotide sequence ID" value="NC_008836.1"/>
</dbReference>
<dbReference type="SMR" id="A2SAG6"/>
<dbReference type="GeneID" id="93059506"/>
<dbReference type="KEGG" id="bml:BMA10229_A2991"/>
<dbReference type="HOGENOM" id="CLU_027272_2_3_4"/>
<dbReference type="UniPathway" id="UPA00068">
    <property type="reaction ID" value="UER00114"/>
</dbReference>
<dbReference type="Proteomes" id="UP000002283">
    <property type="component" value="Chromosome I"/>
</dbReference>
<dbReference type="GO" id="GO:0005829">
    <property type="term" value="C:cytosol"/>
    <property type="evidence" value="ECO:0007669"/>
    <property type="project" value="TreeGrafter"/>
</dbReference>
<dbReference type="GO" id="GO:0004056">
    <property type="term" value="F:argininosuccinate lyase activity"/>
    <property type="evidence" value="ECO:0007669"/>
    <property type="project" value="UniProtKB-UniRule"/>
</dbReference>
<dbReference type="GO" id="GO:0042450">
    <property type="term" value="P:arginine biosynthetic process via ornithine"/>
    <property type="evidence" value="ECO:0007669"/>
    <property type="project" value="InterPro"/>
</dbReference>
<dbReference type="GO" id="GO:0006526">
    <property type="term" value="P:L-arginine biosynthetic process"/>
    <property type="evidence" value="ECO:0007669"/>
    <property type="project" value="UniProtKB-UniRule"/>
</dbReference>
<dbReference type="CDD" id="cd01359">
    <property type="entry name" value="Argininosuccinate_lyase"/>
    <property type="match status" value="1"/>
</dbReference>
<dbReference type="FunFam" id="1.10.275.10:FF:000002">
    <property type="entry name" value="Argininosuccinate lyase"/>
    <property type="match status" value="1"/>
</dbReference>
<dbReference type="FunFam" id="1.10.40.30:FF:000001">
    <property type="entry name" value="Argininosuccinate lyase"/>
    <property type="match status" value="1"/>
</dbReference>
<dbReference type="FunFam" id="1.20.200.10:FF:000015">
    <property type="entry name" value="argininosuccinate lyase isoform X2"/>
    <property type="match status" value="1"/>
</dbReference>
<dbReference type="Gene3D" id="1.10.40.30">
    <property type="entry name" value="Fumarase/aspartase (C-terminal domain)"/>
    <property type="match status" value="1"/>
</dbReference>
<dbReference type="Gene3D" id="1.20.200.10">
    <property type="entry name" value="Fumarase/aspartase (Central domain)"/>
    <property type="match status" value="1"/>
</dbReference>
<dbReference type="Gene3D" id="1.10.275.10">
    <property type="entry name" value="Fumarase/aspartase (N-terminal domain)"/>
    <property type="match status" value="1"/>
</dbReference>
<dbReference type="HAMAP" id="MF_00006">
    <property type="entry name" value="Arg_succ_lyase"/>
    <property type="match status" value="1"/>
</dbReference>
<dbReference type="InterPro" id="IPR029419">
    <property type="entry name" value="Arg_succ_lyase_C"/>
</dbReference>
<dbReference type="InterPro" id="IPR009049">
    <property type="entry name" value="Argininosuccinate_lyase"/>
</dbReference>
<dbReference type="InterPro" id="IPR024083">
    <property type="entry name" value="Fumarase/histidase_N"/>
</dbReference>
<dbReference type="InterPro" id="IPR020557">
    <property type="entry name" value="Fumarate_lyase_CS"/>
</dbReference>
<dbReference type="InterPro" id="IPR000362">
    <property type="entry name" value="Fumarate_lyase_fam"/>
</dbReference>
<dbReference type="InterPro" id="IPR022761">
    <property type="entry name" value="Fumarate_lyase_N"/>
</dbReference>
<dbReference type="InterPro" id="IPR008948">
    <property type="entry name" value="L-Aspartase-like"/>
</dbReference>
<dbReference type="NCBIfam" id="TIGR00838">
    <property type="entry name" value="argH"/>
    <property type="match status" value="1"/>
</dbReference>
<dbReference type="PANTHER" id="PTHR43814">
    <property type="entry name" value="ARGININOSUCCINATE LYASE"/>
    <property type="match status" value="1"/>
</dbReference>
<dbReference type="PANTHER" id="PTHR43814:SF1">
    <property type="entry name" value="ARGININOSUCCINATE LYASE"/>
    <property type="match status" value="1"/>
</dbReference>
<dbReference type="Pfam" id="PF14698">
    <property type="entry name" value="ASL_C2"/>
    <property type="match status" value="1"/>
</dbReference>
<dbReference type="Pfam" id="PF00206">
    <property type="entry name" value="Lyase_1"/>
    <property type="match status" value="1"/>
</dbReference>
<dbReference type="PRINTS" id="PR00145">
    <property type="entry name" value="ARGSUCLYASE"/>
</dbReference>
<dbReference type="PRINTS" id="PR00149">
    <property type="entry name" value="FUMRATELYASE"/>
</dbReference>
<dbReference type="SUPFAM" id="SSF48557">
    <property type="entry name" value="L-aspartase-like"/>
    <property type="match status" value="1"/>
</dbReference>
<dbReference type="PROSITE" id="PS00163">
    <property type="entry name" value="FUMARATE_LYASES"/>
    <property type="match status" value="1"/>
</dbReference>
<sequence length="469" mass="51173">MTSQLHKKGEAWSARFSEPMSELVKRYTSSVFFDKRLALVDIAGSLAHAGMLAAQKIISADDLAAIERGMAQIKGEIERGEFEWQLDLEDVHLNIEARLTALIGDAGKRLHTGRSRNDQVATDIRLWLRGEIDRIGGLLNDLRGALIDLAEQNADTILPGFTHLQVAQPVTFGHHLLAYVEMFSRDAERMRDCRARVNRLPLGAAALAGTSYPIDRHAVAKTLGFDGICANSLDAVSDRDFAIEFTAAAALVMTHVSRFSEELVLWMSPRVGFIDIADRFCTGSSIMPQKKNPDVPELARGKTGRVNGHLMALLTLMKGQPLAYNKDNQEDKEPLFDTVDTVADTLRIFAEMVAGITVKPDAMRAAALQGFSTATDLADYLVKRGLPFRDAHEAVAHAVKVCDARGIDLADLTLDEMKQELPNVAHLIGEDVFDYLTLEGSVASRNHPGGTAPDQVRAAAKAARAALGQ</sequence>
<protein>
    <recommendedName>
        <fullName evidence="1">Argininosuccinate lyase</fullName>
        <shortName evidence="1">ASAL</shortName>
        <ecNumber evidence="1">4.3.2.1</ecNumber>
    </recommendedName>
    <alternativeName>
        <fullName evidence="1">Arginosuccinase</fullName>
    </alternativeName>
</protein>
<organism>
    <name type="scientific">Burkholderia mallei (strain NCTC 10229)</name>
    <dbReference type="NCBI Taxonomy" id="412022"/>
    <lineage>
        <taxon>Bacteria</taxon>
        <taxon>Pseudomonadati</taxon>
        <taxon>Pseudomonadota</taxon>
        <taxon>Betaproteobacteria</taxon>
        <taxon>Burkholderiales</taxon>
        <taxon>Burkholderiaceae</taxon>
        <taxon>Burkholderia</taxon>
        <taxon>pseudomallei group</taxon>
    </lineage>
</organism>
<feature type="chain" id="PRO_1000000459" description="Argininosuccinate lyase">
    <location>
        <begin position="1"/>
        <end position="469"/>
    </location>
</feature>
<comment type="catalytic activity">
    <reaction evidence="1">
        <text>2-(N(omega)-L-arginino)succinate = fumarate + L-arginine</text>
        <dbReference type="Rhea" id="RHEA:24020"/>
        <dbReference type="ChEBI" id="CHEBI:29806"/>
        <dbReference type="ChEBI" id="CHEBI:32682"/>
        <dbReference type="ChEBI" id="CHEBI:57472"/>
        <dbReference type="EC" id="4.3.2.1"/>
    </reaction>
</comment>
<comment type="pathway">
    <text evidence="1">Amino-acid biosynthesis; L-arginine biosynthesis; L-arginine from L-ornithine and carbamoyl phosphate: step 3/3.</text>
</comment>
<comment type="subcellular location">
    <subcellularLocation>
        <location evidence="1">Cytoplasm</location>
    </subcellularLocation>
</comment>
<comment type="similarity">
    <text evidence="1">Belongs to the lyase 1 family. Argininosuccinate lyase subfamily.</text>
</comment>
<accession>A2SAG6</accession>
<reference key="1">
    <citation type="journal article" date="2010" name="Genome Biol. Evol.">
        <title>Continuing evolution of Burkholderia mallei through genome reduction and large-scale rearrangements.</title>
        <authorList>
            <person name="Losada L."/>
            <person name="Ronning C.M."/>
            <person name="DeShazer D."/>
            <person name="Woods D."/>
            <person name="Fedorova N."/>
            <person name="Kim H.S."/>
            <person name="Shabalina S.A."/>
            <person name="Pearson T.R."/>
            <person name="Brinkac L."/>
            <person name="Tan P."/>
            <person name="Nandi T."/>
            <person name="Crabtree J."/>
            <person name="Badger J."/>
            <person name="Beckstrom-Sternberg S."/>
            <person name="Saqib M."/>
            <person name="Schutzer S.E."/>
            <person name="Keim P."/>
            <person name="Nierman W.C."/>
        </authorList>
    </citation>
    <scope>NUCLEOTIDE SEQUENCE [LARGE SCALE GENOMIC DNA]</scope>
    <source>
        <strain>NCTC 10229</strain>
    </source>
</reference>
<name>ARLY_BURM9</name>